<evidence type="ECO:0000255" key="1">
    <source>
        <dbReference type="HAMAP-Rule" id="MF_00458"/>
    </source>
</evidence>
<evidence type="ECO:0000305" key="2"/>
<comment type="function">
    <text>PsaA and PsaB bind P700, the primary electron donor of photosystem I (PSI), as well as the electron acceptors A0, A1 and FX. PSI is a plastocyanin-ferredoxin oxidoreductase, converting photonic excitation into a charge separation, which transfers an electron from the donor P700 chlorophyll pair to the spectroscopically characterized acceptors A0, A1, FX, FA and FB in turn. Oxidized P700 is reduced on the lumenal side of the thylakoid membrane by plastocyanin.</text>
</comment>
<comment type="catalytic activity">
    <reaction evidence="1">
        <text>reduced [plastocyanin] + hnu + oxidized [2Fe-2S]-[ferredoxin] = oxidized [plastocyanin] + reduced [2Fe-2S]-[ferredoxin]</text>
        <dbReference type="Rhea" id="RHEA:30407"/>
        <dbReference type="Rhea" id="RHEA-COMP:10000"/>
        <dbReference type="Rhea" id="RHEA-COMP:10001"/>
        <dbReference type="Rhea" id="RHEA-COMP:10039"/>
        <dbReference type="Rhea" id="RHEA-COMP:10040"/>
        <dbReference type="ChEBI" id="CHEBI:29036"/>
        <dbReference type="ChEBI" id="CHEBI:30212"/>
        <dbReference type="ChEBI" id="CHEBI:33737"/>
        <dbReference type="ChEBI" id="CHEBI:33738"/>
        <dbReference type="ChEBI" id="CHEBI:49552"/>
        <dbReference type="EC" id="1.97.1.12"/>
    </reaction>
</comment>
<comment type="cofactor">
    <text evidence="1">P700 is a chlorophyll a/chlorophyll a' dimer, A0 is one or more chlorophyll a, A1 is one or both phylloquinones and FX is a shared 4Fe-4S iron-sulfur center.</text>
</comment>
<comment type="subunit">
    <text evidence="1">The PsaA/B heterodimer binds the P700 chlorophyll special pair and subsequent electron acceptors. PSI consists of a core antenna complex that captures photons, and an electron transfer chain that converts photonic excitation into a charge separation. The eukaryotic PSI reaction center is composed of at least 11 subunits.</text>
</comment>
<comment type="subcellular location">
    <subcellularLocation>
        <location evidence="1">Plastid</location>
        <location evidence="1">Chloroplast thylakoid membrane</location>
        <topology evidence="1">Multi-pass membrane protein</topology>
    </subcellularLocation>
</comment>
<comment type="similarity">
    <text evidence="1">Belongs to the PsaA/PsaB family.</text>
</comment>
<keyword id="KW-0004">4Fe-4S</keyword>
<keyword id="KW-0148">Chlorophyll</keyword>
<keyword id="KW-0150">Chloroplast</keyword>
<keyword id="KW-0157">Chromophore</keyword>
<keyword id="KW-0249">Electron transport</keyword>
<keyword id="KW-0408">Iron</keyword>
<keyword id="KW-0411">Iron-sulfur</keyword>
<keyword id="KW-0460">Magnesium</keyword>
<keyword id="KW-0472">Membrane</keyword>
<keyword id="KW-0479">Metal-binding</keyword>
<keyword id="KW-0560">Oxidoreductase</keyword>
<keyword id="KW-0602">Photosynthesis</keyword>
<keyword id="KW-0603">Photosystem I</keyword>
<keyword id="KW-0934">Plastid</keyword>
<keyword id="KW-0793">Thylakoid</keyword>
<keyword id="KW-0812">Transmembrane</keyword>
<keyword id="KW-1133">Transmembrane helix</keyword>
<keyword id="KW-0813">Transport</keyword>
<accession>Q9MUK2</accession>
<accession>B2Y1V0</accession>
<accession>B7ZI58</accession>
<reference key="1">
    <citation type="journal article" date="2008" name="BMC Evol. Biol.">
        <title>The complete plastid genome sequence of Welwitschia mirabilis: an unusually compact plastome with accelerated divergence rates.</title>
        <authorList>
            <person name="McCoy S.R."/>
            <person name="Kuehl J.V."/>
            <person name="Boore J.L."/>
            <person name="Raubeson L.A."/>
        </authorList>
    </citation>
    <scope>NUCLEOTIDE SEQUENCE [LARGE SCALE GENOMIC DNA]</scope>
</reference>
<reference key="2">
    <citation type="journal article" date="2009" name="Mol. Phylogenet. Evol.">
        <title>Evolution of reduced and compact chloroplast genomes (cpDNAs) in gnetophytes: Selection toward a lower-cost strategy.</title>
        <authorList>
            <person name="Wu C.-S."/>
            <person name="Lai Y.-T."/>
            <person name="Lin C.-P."/>
            <person name="Wang Y.-N."/>
            <person name="Chaw S.-M."/>
        </authorList>
    </citation>
    <scope>NUCLEOTIDE SEQUENCE [LARGE SCALE GENOMIC DNA]</scope>
</reference>
<reference key="3">
    <citation type="journal article" date="2000" name="Mol. Biol. Evol.">
        <title>Error, bias, and long-branch attraction in data for two chloroplast photosystem genes in seed plants.</title>
        <authorList>
            <person name="Sanderson M.J."/>
            <person name="Wojciechowski M.F."/>
            <person name="Hu J.-M."/>
            <person name="Sher Khan T."/>
            <person name="Brady S.G."/>
        </authorList>
    </citation>
    <scope>NUCLEOTIDE SEQUENCE [GENOMIC DNA] OF 11-730</scope>
</reference>
<gene>
    <name evidence="1" type="primary">psaA</name>
</gene>
<dbReference type="EC" id="1.97.1.12" evidence="1"/>
<dbReference type="EMBL" id="EU342371">
    <property type="protein sequence ID" value="ABY26780.1"/>
    <property type="molecule type" value="Genomic_DNA"/>
</dbReference>
<dbReference type="EMBL" id="AP009568">
    <property type="protein sequence ID" value="BAH11238.1"/>
    <property type="molecule type" value="Genomic_DNA"/>
</dbReference>
<dbReference type="EMBL" id="AF180013">
    <property type="protein sequence ID" value="AAF29814.1"/>
    <property type="molecule type" value="Genomic_DNA"/>
</dbReference>
<dbReference type="RefSeq" id="YP_001876567.1">
    <property type="nucleotide sequence ID" value="NC_010654.1"/>
</dbReference>
<dbReference type="SMR" id="Q9MUK2"/>
<dbReference type="GeneID" id="6276224"/>
<dbReference type="GO" id="GO:0009535">
    <property type="term" value="C:chloroplast thylakoid membrane"/>
    <property type="evidence" value="ECO:0007669"/>
    <property type="project" value="UniProtKB-SubCell"/>
</dbReference>
<dbReference type="GO" id="GO:0009522">
    <property type="term" value="C:photosystem I"/>
    <property type="evidence" value="ECO:0007669"/>
    <property type="project" value="UniProtKB-KW"/>
</dbReference>
<dbReference type="GO" id="GO:0051539">
    <property type="term" value="F:4 iron, 4 sulfur cluster binding"/>
    <property type="evidence" value="ECO:0007669"/>
    <property type="project" value="UniProtKB-KW"/>
</dbReference>
<dbReference type="GO" id="GO:0016168">
    <property type="term" value="F:chlorophyll binding"/>
    <property type="evidence" value="ECO:0007669"/>
    <property type="project" value="UniProtKB-KW"/>
</dbReference>
<dbReference type="GO" id="GO:0009055">
    <property type="term" value="F:electron transfer activity"/>
    <property type="evidence" value="ECO:0007669"/>
    <property type="project" value="UniProtKB-UniRule"/>
</dbReference>
<dbReference type="GO" id="GO:0000287">
    <property type="term" value="F:magnesium ion binding"/>
    <property type="evidence" value="ECO:0007669"/>
    <property type="project" value="UniProtKB-UniRule"/>
</dbReference>
<dbReference type="GO" id="GO:0016491">
    <property type="term" value="F:oxidoreductase activity"/>
    <property type="evidence" value="ECO:0007669"/>
    <property type="project" value="UniProtKB-KW"/>
</dbReference>
<dbReference type="GO" id="GO:0015979">
    <property type="term" value="P:photosynthesis"/>
    <property type="evidence" value="ECO:0007669"/>
    <property type="project" value="UniProtKB-UniRule"/>
</dbReference>
<dbReference type="FunFam" id="1.20.1130.10:FF:000001">
    <property type="entry name" value="Photosystem I P700 chlorophyll a apoprotein A2"/>
    <property type="match status" value="1"/>
</dbReference>
<dbReference type="Gene3D" id="1.20.1130.10">
    <property type="entry name" value="Photosystem I PsaA/PsaB"/>
    <property type="match status" value="1"/>
</dbReference>
<dbReference type="HAMAP" id="MF_00458">
    <property type="entry name" value="PSI_PsaA"/>
    <property type="match status" value="1"/>
</dbReference>
<dbReference type="InterPro" id="IPR006243">
    <property type="entry name" value="PSI_PsaA"/>
</dbReference>
<dbReference type="InterPro" id="IPR001280">
    <property type="entry name" value="PSI_PsaA/B"/>
</dbReference>
<dbReference type="InterPro" id="IPR020586">
    <property type="entry name" value="PSI_PsaA/B_CS"/>
</dbReference>
<dbReference type="InterPro" id="IPR036408">
    <property type="entry name" value="PSI_PsaA/B_sf"/>
</dbReference>
<dbReference type="NCBIfam" id="TIGR01335">
    <property type="entry name" value="psaA"/>
    <property type="match status" value="1"/>
</dbReference>
<dbReference type="PANTHER" id="PTHR30128">
    <property type="entry name" value="OUTER MEMBRANE PROTEIN, OMPA-RELATED"/>
    <property type="match status" value="1"/>
</dbReference>
<dbReference type="PANTHER" id="PTHR30128:SF19">
    <property type="entry name" value="PHOTOSYSTEM I P700 CHLOROPHYLL A APOPROTEIN A1-RELATED"/>
    <property type="match status" value="1"/>
</dbReference>
<dbReference type="Pfam" id="PF00223">
    <property type="entry name" value="PsaA_PsaB"/>
    <property type="match status" value="1"/>
</dbReference>
<dbReference type="PIRSF" id="PIRSF002905">
    <property type="entry name" value="PSI_A"/>
    <property type="match status" value="1"/>
</dbReference>
<dbReference type="PRINTS" id="PR00257">
    <property type="entry name" value="PHOTSYSPSAAB"/>
</dbReference>
<dbReference type="SUPFAM" id="SSF81558">
    <property type="entry name" value="Photosystem I subunits PsaA/PsaB"/>
    <property type="match status" value="1"/>
</dbReference>
<dbReference type="PROSITE" id="PS00419">
    <property type="entry name" value="PHOTOSYSTEM_I_PSAAB"/>
    <property type="match status" value="1"/>
</dbReference>
<geneLocation type="chloroplast"/>
<proteinExistence type="inferred from homology"/>
<organism>
    <name type="scientific">Welwitschia mirabilis</name>
    <name type="common">Tree tumbo</name>
    <name type="synonym">Welwitschia bainesii</name>
    <dbReference type="NCBI Taxonomy" id="3377"/>
    <lineage>
        <taxon>Eukaryota</taxon>
        <taxon>Viridiplantae</taxon>
        <taxon>Streptophyta</taxon>
        <taxon>Embryophyta</taxon>
        <taxon>Tracheophyta</taxon>
        <taxon>Spermatophyta</taxon>
        <taxon>Gnetopsida</taxon>
        <taxon>Gnetidae</taxon>
        <taxon>Welwitschiales</taxon>
        <taxon>Welwitschiaceae</taxon>
        <taxon>Welwitschia</taxon>
    </lineage>
</organism>
<protein>
    <recommendedName>
        <fullName evidence="1">Photosystem I P700 chlorophyll a apoprotein A1</fullName>
        <ecNumber evidence="1">1.97.1.12</ecNumber>
    </recommendedName>
    <alternativeName>
        <fullName evidence="1">PSI-A</fullName>
    </alternativeName>
    <alternativeName>
        <fullName evidence="1">PsaA</fullName>
    </alternativeName>
</protein>
<feature type="chain" id="PRO_0000088581" description="Photosystem I P700 chlorophyll a apoprotein A1">
    <location>
        <begin position="1"/>
        <end position="751"/>
    </location>
</feature>
<feature type="transmembrane region" description="Helical; Name=I" evidence="1">
    <location>
        <begin position="71"/>
        <end position="94"/>
    </location>
</feature>
<feature type="transmembrane region" description="Helical; Name=II" evidence="1">
    <location>
        <begin position="157"/>
        <end position="180"/>
    </location>
</feature>
<feature type="transmembrane region" description="Helical; Name=III" evidence="1">
    <location>
        <begin position="196"/>
        <end position="220"/>
    </location>
</feature>
<feature type="transmembrane region" description="Helical; Name=IV" evidence="1">
    <location>
        <begin position="292"/>
        <end position="310"/>
    </location>
</feature>
<feature type="transmembrane region" description="Helical; Name=V" evidence="1">
    <location>
        <begin position="347"/>
        <end position="370"/>
    </location>
</feature>
<feature type="transmembrane region" description="Helical; Name=VI" evidence="1">
    <location>
        <begin position="386"/>
        <end position="412"/>
    </location>
</feature>
<feature type="transmembrane region" description="Helical; Name=VII" evidence="1">
    <location>
        <begin position="434"/>
        <end position="456"/>
    </location>
</feature>
<feature type="transmembrane region" description="Helical; Name=VIII" evidence="1">
    <location>
        <begin position="532"/>
        <end position="550"/>
    </location>
</feature>
<feature type="transmembrane region" description="Helical; Name=IX" evidence="1">
    <location>
        <begin position="590"/>
        <end position="611"/>
    </location>
</feature>
<feature type="transmembrane region" description="Helical; Name=X" evidence="1">
    <location>
        <begin position="665"/>
        <end position="687"/>
    </location>
</feature>
<feature type="transmembrane region" description="Helical; Name=XI" evidence="1">
    <location>
        <begin position="725"/>
        <end position="745"/>
    </location>
</feature>
<feature type="binding site" evidence="1">
    <location>
        <position position="574"/>
    </location>
    <ligand>
        <name>[4Fe-4S] cluster</name>
        <dbReference type="ChEBI" id="CHEBI:49883"/>
        <note>ligand shared between dimeric partners</note>
    </ligand>
</feature>
<feature type="binding site" evidence="1">
    <location>
        <position position="583"/>
    </location>
    <ligand>
        <name>[4Fe-4S] cluster</name>
        <dbReference type="ChEBI" id="CHEBI:49883"/>
        <note>ligand shared between dimeric partners</note>
    </ligand>
</feature>
<feature type="binding site" description="axial binding residue" evidence="1">
    <location>
        <position position="676"/>
    </location>
    <ligand>
        <name>chlorophyll a'</name>
        <dbReference type="ChEBI" id="CHEBI:189419"/>
        <label>A1</label>
    </ligand>
    <ligandPart>
        <name>Mg</name>
        <dbReference type="ChEBI" id="CHEBI:25107"/>
    </ligandPart>
</feature>
<feature type="binding site" description="axial binding residue" evidence="1">
    <location>
        <position position="684"/>
    </location>
    <ligand>
        <name>chlorophyll a</name>
        <dbReference type="ChEBI" id="CHEBI:58416"/>
        <label>A3</label>
    </ligand>
    <ligandPart>
        <name>Mg</name>
        <dbReference type="ChEBI" id="CHEBI:25107"/>
    </ligandPart>
</feature>
<feature type="binding site" evidence="1">
    <location>
        <position position="692"/>
    </location>
    <ligand>
        <name>chlorophyll a</name>
        <dbReference type="ChEBI" id="CHEBI:58416"/>
        <label>A3</label>
    </ligand>
</feature>
<feature type="binding site" evidence="1">
    <location>
        <position position="693"/>
    </location>
    <ligand>
        <name>phylloquinone</name>
        <dbReference type="ChEBI" id="CHEBI:18067"/>
        <label>A</label>
    </ligand>
</feature>
<feature type="sequence conflict" description="In Ref. 2; BAH11238." evidence="2" ref="2">
    <original>M</original>
    <variation>T</variation>
    <location>
        <position position="469"/>
    </location>
</feature>
<sequence>MIIRSPESEVKIVVERDPIKTSFEKWANPGHFSKTLSKTDPETTTWIWNLHADAHDFDSHTEDLEEISRKVFSAHFGQLAIIFTWLSGMYFHGARFSNYEAWLADPTHIKPSAQVVWPIVGQEILNGDVGGGFRGIQITSGFFPIWRASGITSELQLYCTAIGALIFAALMLFAGWFHYHKAAPKLAWFQQVESMLNHHLAGLLGLGSLSWAGHQIHVSLPINQLLDAGVDPKEIPLPHEFILNRDLLNQLYPSFAQGLLPFFTLNWSEYSEILTFRGGLNPVTGGLWLTDTAHHHLAIAVLFLIAGHMYKTNWGIGHSLKEILEAHKGPFTGEGHKGLYEILTNSWHAQLALNLAMLGSLTIIVAHHMYSMPPYPYLAIDYSTQLSLFTHHMWIGGFIIVGAAAHAAIFLVRDYDSTTSYNNLLDRVLRHRDAIISHLNWVCIFLGFHSFGLYIHNDTMSALGRPQDMFSDTAIQLQPIFAQWLQNTHVTAPSFTAPAATASTSLTWGGGDIITVGNKVALLPIPLGTADFLVHHIHAFTIHVTVLILLKGVLFARSSRLIPDKANLGFRFPCDGPGRGGTCQVSAWDHVFLGLFWMYNAISVVIFHFSWKMQSDVWGNISKQGVVTHITGGNFAQSSITINGWLRDFLWAQASQVIQSYGSALSAYGLFFLGAHFVWAFSLMFLFSGRGYWQELIESIVWAHNKLKVAPAIQPRALSIVQGRAVGVAHYLLGGIVTTWAFFLARIIAVE</sequence>
<name>PSAA_WELMI</name>